<evidence type="ECO:0000255" key="1">
    <source>
        <dbReference type="HAMAP-Rule" id="MF_00549"/>
    </source>
</evidence>
<reference key="1">
    <citation type="journal article" date="2001" name="Proc. Natl. Acad. Sci. U.S.A.">
        <title>Complete genomic sequence of Pasteurella multocida Pm70.</title>
        <authorList>
            <person name="May B.J."/>
            <person name="Zhang Q."/>
            <person name="Li L.L."/>
            <person name="Paustian M.L."/>
            <person name="Whittam T.S."/>
            <person name="Kapur V."/>
        </authorList>
    </citation>
    <scope>NUCLEOTIDE SEQUENCE [LARGE SCALE GENOMIC DNA]</scope>
    <source>
        <strain>Pm70</strain>
    </source>
</reference>
<protein>
    <recommendedName>
        <fullName evidence="1">Methylglyoxal synthase</fullName>
        <shortName evidence="1">MGS</shortName>
        <ecNumber evidence="1">4.2.3.3</ecNumber>
    </recommendedName>
</protein>
<gene>
    <name evidence="1" type="primary">mgsA</name>
    <name type="ordered locus">PM0394</name>
</gene>
<keyword id="KW-0456">Lyase</keyword>
<keyword id="KW-1185">Reference proteome</keyword>
<feature type="chain" id="PRO_0000178639" description="Methylglyoxal synthase">
    <location>
        <begin position="1"/>
        <end position="152"/>
    </location>
</feature>
<feature type="domain" description="MGS-like" evidence="1">
    <location>
        <begin position="1"/>
        <end position="152"/>
    </location>
</feature>
<feature type="active site" description="Proton donor/acceptor" evidence="1">
    <location>
        <position position="71"/>
    </location>
</feature>
<feature type="binding site" evidence="1">
    <location>
        <position position="19"/>
    </location>
    <ligand>
        <name>substrate</name>
    </ligand>
</feature>
<feature type="binding site" evidence="1">
    <location>
        <position position="23"/>
    </location>
    <ligand>
        <name>substrate</name>
    </ligand>
</feature>
<feature type="binding site" evidence="1">
    <location>
        <begin position="45"/>
        <end position="48"/>
    </location>
    <ligand>
        <name>substrate</name>
    </ligand>
</feature>
<feature type="binding site" evidence="1">
    <location>
        <begin position="65"/>
        <end position="66"/>
    </location>
    <ligand>
        <name>substrate</name>
    </ligand>
</feature>
<feature type="binding site" evidence="1">
    <location>
        <position position="98"/>
    </location>
    <ligand>
        <name>substrate</name>
    </ligand>
</feature>
<dbReference type="EC" id="4.2.3.3" evidence="1"/>
<dbReference type="EMBL" id="AE004439">
    <property type="protein sequence ID" value="AAK02478.1"/>
    <property type="molecule type" value="Genomic_DNA"/>
</dbReference>
<dbReference type="RefSeq" id="WP_005721627.1">
    <property type="nucleotide sequence ID" value="NC_002663.1"/>
</dbReference>
<dbReference type="SMR" id="Q9CNN3"/>
<dbReference type="STRING" id="272843.PM0394"/>
<dbReference type="EnsemblBacteria" id="AAK02478">
    <property type="protein sequence ID" value="AAK02478"/>
    <property type="gene ID" value="PM0394"/>
</dbReference>
<dbReference type="KEGG" id="pmu:PM0394"/>
<dbReference type="HOGENOM" id="CLU_120420_0_1_6"/>
<dbReference type="OrthoDB" id="9787147at2"/>
<dbReference type="Proteomes" id="UP000000809">
    <property type="component" value="Chromosome"/>
</dbReference>
<dbReference type="GO" id="GO:0005829">
    <property type="term" value="C:cytosol"/>
    <property type="evidence" value="ECO:0007669"/>
    <property type="project" value="TreeGrafter"/>
</dbReference>
<dbReference type="GO" id="GO:0008929">
    <property type="term" value="F:methylglyoxal synthase activity"/>
    <property type="evidence" value="ECO:0007669"/>
    <property type="project" value="UniProtKB-UniRule"/>
</dbReference>
<dbReference type="GO" id="GO:0019242">
    <property type="term" value="P:methylglyoxal biosynthetic process"/>
    <property type="evidence" value="ECO:0007669"/>
    <property type="project" value="UniProtKB-UniRule"/>
</dbReference>
<dbReference type="CDD" id="cd01422">
    <property type="entry name" value="MGS"/>
    <property type="match status" value="1"/>
</dbReference>
<dbReference type="FunFam" id="3.40.50.1380:FF:000002">
    <property type="entry name" value="Methylglyoxal synthase"/>
    <property type="match status" value="1"/>
</dbReference>
<dbReference type="Gene3D" id="3.40.50.1380">
    <property type="entry name" value="Methylglyoxal synthase-like domain"/>
    <property type="match status" value="1"/>
</dbReference>
<dbReference type="HAMAP" id="MF_00549">
    <property type="entry name" value="Methylglyoxal_synth"/>
    <property type="match status" value="1"/>
</dbReference>
<dbReference type="InterPro" id="IPR004363">
    <property type="entry name" value="Methylgl_synth"/>
</dbReference>
<dbReference type="InterPro" id="IPR018148">
    <property type="entry name" value="Methylglyoxal_synth_AS"/>
</dbReference>
<dbReference type="InterPro" id="IPR011607">
    <property type="entry name" value="MGS-like_dom"/>
</dbReference>
<dbReference type="InterPro" id="IPR036914">
    <property type="entry name" value="MGS-like_dom_sf"/>
</dbReference>
<dbReference type="NCBIfam" id="TIGR00160">
    <property type="entry name" value="MGSA"/>
    <property type="match status" value="1"/>
</dbReference>
<dbReference type="NCBIfam" id="NF003559">
    <property type="entry name" value="PRK05234.1"/>
    <property type="match status" value="1"/>
</dbReference>
<dbReference type="PANTHER" id="PTHR30492">
    <property type="entry name" value="METHYLGLYOXAL SYNTHASE"/>
    <property type="match status" value="1"/>
</dbReference>
<dbReference type="PANTHER" id="PTHR30492:SF0">
    <property type="entry name" value="METHYLGLYOXAL SYNTHASE"/>
    <property type="match status" value="1"/>
</dbReference>
<dbReference type="Pfam" id="PF02142">
    <property type="entry name" value="MGS"/>
    <property type="match status" value="1"/>
</dbReference>
<dbReference type="PIRSF" id="PIRSF006614">
    <property type="entry name" value="Methylglyox_syn"/>
    <property type="match status" value="1"/>
</dbReference>
<dbReference type="SMART" id="SM00851">
    <property type="entry name" value="MGS"/>
    <property type="match status" value="1"/>
</dbReference>
<dbReference type="SUPFAM" id="SSF52335">
    <property type="entry name" value="Methylglyoxal synthase-like"/>
    <property type="match status" value="1"/>
</dbReference>
<dbReference type="PROSITE" id="PS01335">
    <property type="entry name" value="METHYLGLYOXAL_SYNTH"/>
    <property type="match status" value="1"/>
</dbReference>
<dbReference type="PROSITE" id="PS51855">
    <property type="entry name" value="MGS"/>
    <property type="match status" value="1"/>
</dbReference>
<proteinExistence type="inferred from homology"/>
<organism>
    <name type="scientific">Pasteurella multocida (strain Pm70)</name>
    <dbReference type="NCBI Taxonomy" id="272843"/>
    <lineage>
        <taxon>Bacteria</taxon>
        <taxon>Pseudomonadati</taxon>
        <taxon>Pseudomonadota</taxon>
        <taxon>Gammaproteobacteria</taxon>
        <taxon>Pasteurellales</taxon>
        <taxon>Pasteurellaceae</taxon>
        <taxon>Pasteurella</taxon>
    </lineage>
</organism>
<comment type="function">
    <text evidence="1">Catalyzes the formation of methylglyoxal from dihydroxyacetone phosphate.</text>
</comment>
<comment type="catalytic activity">
    <reaction evidence="1">
        <text>dihydroxyacetone phosphate = methylglyoxal + phosphate</text>
        <dbReference type="Rhea" id="RHEA:17937"/>
        <dbReference type="ChEBI" id="CHEBI:17158"/>
        <dbReference type="ChEBI" id="CHEBI:43474"/>
        <dbReference type="ChEBI" id="CHEBI:57642"/>
        <dbReference type="EC" id="4.2.3.3"/>
    </reaction>
</comment>
<comment type="similarity">
    <text evidence="1">Belongs to the methylglyoxal synthase family.</text>
</comment>
<name>MGSA_PASMU</name>
<sequence>MQSTARTLSVNKHIALVAHDHCKQDLINWCKTHRTLLAQHTLYATGTTGNLIQKEANLPIKSLLSGPMGGDQQLGGLIAEKQIDVLIFFWDPMNAVPHDPDVKALMRIATVWNIPVAMNMATADFLITSPSFAQETQVRIPDYDGYLKERLK</sequence>
<accession>Q9CNN3</accession>